<dbReference type="EC" id="3.-.-.-"/>
<dbReference type="EMBL" id="BA000033">
    <property type="protein sequence ID" value="BAB95151.1"/>
    <property type="molecule type" value="Genomic_DNA"/>
</dbReference>
<dbReference type="RefSeq" id="WP_001003793.1">
    <property type="nucleotide sequence ID" value="NC_003923.1"/>
</dbReference>
<dbReference type="SMR" id="Q8NWS3"/>
<dbReference type="KEGG" id="sam:MW1286"/>
<dbReference type="HOGENOM" id="CLU_023257_1_0_9"/>
<dbReference type="GO" id="GO:0016787">
    <property type="term" value="F:hydrolase activity"/>
    <property type="evidence" value="ECO:0007669"/>
    <property type="project" value="UniProtKB-KW"/>
</dbReference>
<dbReference type="FunFam" id="3.30.70.360:FF:000022">
    <property type="entry name" value="Hippurate hydrolase"/>
    <property type="match status" value="1"/>
</dbReference>
<dbReference type="Gene3D" id="3.30.70.360">
    <property type="match status" value="1"/>
</dbReference>
<dbReference type="Gene3D" id="3.40.630.10">
    <property type="entry name" value="Zn peptidases"/>
    <property type="match status" value="1"/>
</dbReference>
<dbReference type="InterPro" id="IPR017439">
    <property type="entry name" value="Amidohydrolase"/>
</dbReference>
<dbReference type="InterPro" id="IPR036264">
    <property type="entry name" value="Bact_exopeptidase_dim_dom"/>
</dbReference>
<dbReference type="InterPro" id="IPR002933">
    <property type="entry name" value="Peptidase_M20"/>
</dbReference>
<dbReference type="InterPro" id="IPR011650">
    <property type="entry name" value="Peptidase_M20_dimer"/>
</dbReference>
<dbReference type="NCBIfam" id="TIGR01891">
    <property type="entry name" value="amidohydrolases"/>
    <property type="match status" value="1"/>
</dbReference>
<dbReference type="PANTHER" id="PTHR11014:SF63">
    <property type="entry name" value="METALLOPEPTIDASE, PUTATIVE (AFU_ORTHOLOGUE AFUA_6G09600)-RELATED"/>
    <property type="match status" value="1"/>
</dbReference>
<dbReference type="PANTHER" id="PTHR11014">
    <property type="entry name" value="PEPTIDASE M20 FAMILY MEMBER"/>
    <property type="match status" value="1"/>
</dbReference>
<dbReference type="Pfam" id="PF07687">
    <property type="entry name" value="M20_dimer"/>
    <property type="match status" value="1"/>
</dbReference>
<dbReference type="Pfam" id="PF01546">
    <property type="entry name" value="Peptidase_M20"/>
    <property type="match status" value="1"/>
</dbReference>
<dbReference type="PIRSF" id="PIRSF005962">
    <property type="entry name" value="Pept_M20D_amidohydro"/>
    <property type="match status" value="1"/>
</dbReference>
<dbReference type="SUPFAM" id="SSF55031">
    <property type="entry name" value="Bacterial exopeptidase dimerisation domain"/>
    <property type="match status" value="1"/>
</dbReference>
<dbReference type="SUPFAM" id="SSF53187">
    <property type="entry name" value="Zn-dependent exopeptidases"/>
    <property type="match status" value="1"/>
</dbReference>
<sequence length="383" mass="43144">MNELEFVTKHRRHLHQHPELSLHEFETTAYIKAFLDSLNIKYDCPLETGVIAYLEGNGSHTIAYRADIDALPILEENDVPYRSQSDHVMHACGHDGHTTALMLFVQRCKDMQDAGQLPQNVVFIFQPAEETGGGANRLIKAGAFDKYPIEAVFGIHVNPFADEGIAVIRDEEITASATEYRFFLTGLSSHVADKEQGHSCGEALQHVLTQISQIQQFHLNGLKRNIVHIGHFKAGEAINTVPSNGYLEGTIRTYDIDDLTIVKNQMHKIAESVKLLFNVDCEVKFAEGYPPTINSPKLRTQIEDALIKADLNVYDKPTPFLFGEDFSFYGQQLAPAYFVFIGTRNEDKGFVTGLHTSHLNFDEKVLINVVNFYENLLNNYKEV</sequence>
<keyword id="KW-0378">Hydrolase</keyword>
<gene>
    <name type="ordered locus">MW1286</name>
</gene>
<accession>Q8NWS3</accession>
<proteinExistence type="inferred from homology"/>
<name>Y1286_STAAW</name>
<reference key="1">
    <citation type="journal article" date="2002" name="Lancet">
        <title>Genome and virulence determinants of high virulence community-acquired MRSA.</title>
        <authorList>
            <person name="Baba T."/>
            <person name="Takeuchi F."/>
            <person name="Kuroda M."/>
            <person name="Yuzawa H."/>
            <person name="Aoki K."/>
            <person name="Oguchi A."/>
            <person name="Nagai Y."/>
            <person name="Iwama N."/>
            <person name="Asano K."/>
            <person name="Naimi T."/>
            <person name="Kuroda H."/>
            <person name="Cui L."/>
            <person name="Yamamoto K."/>
            <person name="Hiramatsu K."/>
        </authorList>
    </citation>
    <scope>NUCLEOTIDE SEQUENCE [LARGE SCALE GENOMIC DNA]</scope>
    <source>
        <strain>MW2</strain>
    </source>
</reference>
<evidence type="ECO:0000305" key="1"/>
<comment type="similarity">
    <text evidence="1">Belongs to the peptidase M20 family.</text>
</comment>
<feature type="chain" id="PRO_0000298623" description="Uncharacterized hydrolase MW1286">
    <location>
        <begin position="1"/>
        <end position="383"/>
    </location>
</feature>
<organism>
    <name type="scientific">Staphylococcus aureus (strain MW2)</name>
    <dbReference type="NCBI Taxonomy" id="196620"/>
    <lineage>
        <taxon>Bacteria</taxon>
        <taxon>Bacillati</taxon>
        <taxon>Bacillota</taxon>
        <taxon>Bacilli</taxon>
        <taxon>Bacillales</taxon>
        <taxon>Staphylococcaceae</taxon>
        <taxon>Staphylococcus</taxon>
    </lineage>
</organism>
<protein>
    <recommendedName>
        <fullName>Uncharacterized hydrolase MW1286</fullName>
        <ecNumber>3.-.-.-</ecNumber>
    </recommendedName>
</protein>